<keyword id="KW-0028">Amino-acid biosynthesis</keyword>
<keyword id="KW-0032">Aminotransferase</keyword>
<keyword id="KW-0368">Histidine biosynthesis</keyword>
<keyword id="KW-0663">Pyridoxal phosphate</keyword>
<keyword id="KW-0808">Transferase</keyword>
<reference key="1">
    <citation type="journal article" date="2012" name="BMC Genomics">
        <title>Comparative genomics and transcriptomics of lineages I, II, and III strains of Listeria monocytogenes.</title>
        <authorList>
            <person name="Hain T."/>
            <person name="Ghai R."/>
            <person name="Billion A."/>
            <person name="Kuenne C.T."/>
            <person name="Steinweg C."/>
            <person name="Izar B."/>
            <person name="Mohamed W."/>
            <person name="Mraheil M."/>
            <person name="Domann E."/>
            <person name="Schaffrath S."/>
            <person name="Karst U."/>
            <person name="Goesmann A."/>
            <person name="Oehm S."/>
            <person name="Puhler A."/>
            <person name="Merkl R."/>
            <person name="Vorwerk S."/>
            <person name="Glaser P."/>
            <person name="Garrido P."/>
            <person name="Rusniok C."/>
            <person name="Buchrieser C."/>
            <person name="Goebel W."/>
            <person name="Chakraborty T."/>
        </authorList>
    </citation>
    <scope>NUCLEOTIDE SEQUENCE [LARGE SCALE GENOMIC DNA]</scope>
    <source>
        <strain>CLIP80459</strain>
    </source>
</reference>
<organism>
    <name type="scientific">Listeria monocytogenes serotype 4b (strain CLIP80459)</name>
    <dbReference type="NCBI Taxonomy" id="568819"/>
    <lineage>
        <taxon>Bacteria</taxon>
        <taxon>Bacillati</taxon>
        <taxon>Bacillota</taxon>
        <taxon>Bacilli</taxon>
        <taxon>Bacillales</taxon>
        <taxon>Listeriaceae</taxon>
        <taxon>Listeria</taxon>
    </lineage>
</organism>
<comment type="catalytic activity">
    <reaction evidence="1">
        <text>L-histidinol phosphate + 2-oxoglutarate = 3-(imidazol-4-yl)-2-oxopropyl phosphate + L-glutamate</text>
        <dbReference type="Rhea" id="RHEA:23744"/>
        <dbReference type="ChEBI" id="CHEBI:16810"/>
        <dbReference type="ChEBI" id="CHEBI:29985"/>
        <dbReference type="ChEBI" id="CHEBI:57766"/>
        <dbReference type="ChEBI" id="CHEBI:57980"/>
        <dbReference type="EC" id="2.6.1.9"/>
    </reaction>
</comment>
<comment type="cofactor">
    <cofactor evidence="1">
        <name>pyridoxal 5'-phosphate</name>
        <dbReference type="ChEBI" id="CHEBI:597326"/>
    </cofactor>
</comment>
<comment type="pathway">
    <text evidence="1">Amino-acid biosynthesis; L-histidine biosynthesis; L-histidine from 5-phospho-alpha-D-ribose 1-diphosphate: step 7/9.</text>
</comment>
<comment type="subunit">
    <text evidence="1">Homodimer.</text>
</comment>
<comment type="similarity">
    <text evidence="1">Belongs to the class-II pyridoxal-phosphate-dependent aminotransferase family. Histidinol-phosphate aminotransferase subfamily.</text>
</comment>
<feature type="chain" id="PRO_1000213309" description="Histidinol-phosphate aminotransferase">
    <location>
        <begin position="1"/>
        <end position="360"/>
    </location>
</feature>
<feature type="modified residue" description="N6-(pyridoxal phosphate)lysine" evidence="1">
    <location>
        <position position="222"/>
    </location>
</feature>
<evidence type="ECO:0000255" key="1">
    <source>
        <dbReference type="HAMAP-Rule" id="MF_01023"/>
    </source>
</evidence>
<name>HIS8_LISMC</name>
<protein>
    <recommendedName>
        <fullName evidence="1">Histidinol-phosphate aminotransferase</fullName>
        <ecNumber evidence="1">2.6.1.9</ecNumber>
    </recommendedName>
    <alternativeName>
        <fullName evidence="1">Imidazole acetol-phosphate transaminase</fullName>
    </alternativeName>
</protein>
<gene>
    <name evidence="1" type="primary">hisC</name>
    <name type="ordered locus">Lm4b_01942</name>
</gene>
<sequence length="360" mass="39863">MKWKKSLTGLSSYKPGKREEEVMAELGLTKITKLSSNENPLGTSPKVAELQADSSVETEIYPDGWASSLRTVVADFYQLEEEELIFTAGVDELIELLTRVLLDTTKNTVMATPTFVQYRQNALIEGAEVREIPLLVDGAHDLDGMLNAIDDNTTIVWVCNPNNPTGNYIDLADIQAFLDKVPSDVLVVLDEAYIEYVTPQPEKHEKLIRTYKNLIITRTFSKIYGLASARVGYGIADKAIIEQLNIVRPPFNTTSIGQKLAIEAIKDQAFIEACRTSNANGIKQYEAFAKRFEQVKLYPANGNFVLIDLGIEAGTIFSYLEKNGYITRSGAALGFPTAVRITIGKEEENSAVIALLEKLL</sequence>
<dbReference type="EC" id="2.6.1.9" evidence="1"/>
<dbReference type="EMBL" id="FM242711">
    <property type="protein sequence ID" value="CAS05700.1"/>
    <property type="molecule type" value="Genomic_DNA"/>
</dbReference>
<dbReference type="RefSeq" id="WP_012681368.1">
    <property type="nucleotide sequence ID" value="NC_012488.1"/>
</dbReference>
<dbReference type="SMR" id="C1KWM5"/>
<dbReference type="KEGG" id="lmc:Lm4b_01942"/>
<dbReference type="HOGENOM" id="CLU_017584_3_3_9"/>
<dbReference type="UniPathway" id="UPA00031">
    <property type="reaction ID" value="UER00012"/>
</dbReference>
<dbReference type="GO" id="GO:0004400">
    <property type="term" value="F:histidinol-phosphate transaminase activity"/>
    <property type="evidence" value="ECO:0007669"/>
    <property type="project" value="UniProtKB-UniRule"/>
</dbReference>
<dbReference type="GO" id="GO:0030170">
    <property type="term" value="F:pyridoxal phosphate binding"/>
    <property type="evidence" value="ECO:0007669"/>
    <property type="project" value="InterPro"/>
</dbReference>
<dbReference type="GO" id="GO:0000105">
    <property type="term" value="P:L-histidine biosynthetic process"/>
    <property type="evidence" value="ECO:0007669"/>
    <property type="project" value="UniProtKB-UniRule"/>
</dbReference>
<dbReference type="CDD" id="cd00609">
    <property type="entry name" value="AAT_like"/>
    <property type="match status" value="1"/>
</dbReference>
<dbReference type="Gene3D" id="3.90.1150.10">
    <property type="entry name" value="Aspartate Aminotransferase, domain 1"/>
    <property type="match status" value="1"/>
</dbReference>
<dbReference type="Gene3D" id="3.40.640.10">
    <property type="entry name" value="Type I PLP-dependent aspartate aminotransferase-like (Major domain)"/>
    <property type="match status" value="1"/>
</dbReference>
<dbReference type="HAMAP" id="MF_01023">
    <property type="entry name" value="HisC_aminotrans_2"/>
    <property type="match status" value="1"/>
</dbReference>
<dbReference type="InterPro" id="IPR004839">
    <property type="entry name" value="Aminotransferase_I/II_large"/>
</dbReference>
<dbReference type="InterPro" id="IPR005861">
    <property type="entry name" value="HisP_aminotrans"/>
</dbReference>
<dbReference type="InterPro" id="IPR050106">
    <property type="entry name" value="HistidinolP_aminotransfase"/>
</dbReference>
<dbReference type="InterPro" id="IPR015424">
    <property type="entry name" value="PyrdxlP-dep_Trfase"/>
</dbReference>
<dbReference type="InterPro" id="IPR015421">
    <property type="entry name" value="PyrdxlP-dep_Trfase_major"/>
</dbReference>
<dbReference type="InterPro" id="IPR015422">
    <property type="entry name" value="PyrdxlP-dep_Trfase_small"/>
</dbReference>
<dbReference type="NCBIfam" id="TIGR01141">
    <property type="entry name" value="hisC"/>
    <property type="match status" value="1"/>
</dbReference>
<dbReference type="PANTHER" id="PTHR43643:SF3">
    <property type="entry name" value="HISTIDINOL-PHOSPHATE AMINOTRANSFERASE"/>
    <property type="match status" value="1"/>
</dbReference>
<dbReference type="PANTHER" id="PTHR43643">
    <property type="entry name" value="HISTIDINOL-PHOSPHATE AMINOTRANSFERASE 2"/>
    <property type="match status" value="1"/>
</dbReference>
<dbReference type="Pfam" id="PF00155">
    <property type="entry name" value="Aminotran_1_2"/>
    <property type="match status" value="1"/>
</dbReference>
<dbReference type="SUPFAM" id="SSF53383">
    <property type="entry name" value="PLP-dependent transferases"/>
    <property type="match status" value="1"/>
</dbReference>
<accession>C1KWM5</accession>
<proteinExistence type="inferred from homology"/>